<reference key="1">
    <citation type="journal article" date="2000" name="DNA Res.">
        <title>Structural analysis of Arabidopsis thaliana chromosome 3. II. Sequence features of the 4,251,695 bp regions covered by 90 P1, TAC and BAC clones.</title>
        <authorList>
            <person name="Kaneko T."/>
            <person name="Katoh T."/>
            <person name="Sato S."/>
            <person name="Nakamura Y."/>
            <person name="Asamizu E."/>
            <person name="Tabata S."/>
        </authorList>
    </citation>
    <scope>NUCLEOTIDE SEQUENCE [LARGE SCALE GENOMIC DNA]</scope>
    <source>
        <strain>cv. Columbia</strain>
    </source>
</reference>
<reference key="2">
    <citation type="journal article" date="2017" name="Plant J.">
        <title>Araport11: a complete reannotation of the Arabidopsis thaliana reference genome.</title>
        <authorList>
            <person name="Cheng C.Y."/>
            <person name="Krishnakumar V."/>
            <person name="Chan A.P."/>
            <person name="Thibaud-Nissen F."/>
            <person name="Schobel S."/>
            <person name="Town C.D."/>
        </authorList>
    </citation>
    <scope>GENOME REANNOTATION</scope>
    <source>
        <strain>cv. Columbia</strain>
    </source>
</reference>
<accession>Q9LV41</accession>
<accession>F4J7Q5</accession>
<dbReference type="EMBL" id="AB020746">
    <property type="protein sequence ID" value="BAB02014.1"/>
    <property type="molecule type" value="Genomic_DNA"/>
</dbReference>
<dbReference type="EMBL" id="CP002686">
    <property type="protein sequence ID" value="AEE76929.2"/>
    <property type="molecule type" value="Genomic_DNA"/>
</dbReference>
<dbReference type="RefSeq" id="NP_001319634.1">
    <property type="nucleotide sequence ID" value="NM_001338697.1"/>
</dbReference>
<dbReference type="SMR" id="Q9LV41"/>
<dbReference type="FunCoup" id="Q9LV41">
    <property type="interactions" value="7"/>
</dbReference>
<dbReference type="PaxDb" id="3702-AT3G24610.1"/>
<dbReference type="EnsemblPlants" id="AT3G24610.1">
    <property type="protein sequence ID" value="AT3G24610.1"/>
    <property type="gene ID" value="AT3G24610"/>
</dbReference>
<dbReference type="GeneID" id="822057"/>
<dbReference type="Gramene" id="AT3G24610.1">
    <property type="protein sequence ID" value="AT3G24610.1"/>
    <property type="gene ID" value="AT3G24610"/>
</dbReference>
<dbReference type="KEGG" id="ath:AT3G24610"/>
<dbReference type="Araport" id="AT3G24610"/>
<dbReference type="TAIR" id="AT3G24610"/>
<dbReference type="eggNOG" id="KOG1072">
    <property type="taxonomic scope" value="Eukaryota"/>
</dbReference>
<dbReference type="InParanoid" id="Q9LV41"/>
<dbReference type="OMA" id="WCEAGEL"/>
<dbReference type="PhylomeDB" id="Q9LV41"/>
<dbReference type="PRO" id="PR:Q9LV41"/>
<dbReference type="Proteomes" id="UP000006548">
    <property type="component" value="Chromosome 3"/>
</dbReference>
<dbReference type="ExpressionAtlas" id="Q9LV41">
    <property type="expression patterns" value="baseline and differential"/>
</dbReference>
<dbReference type="CDD" id="cd22152">
    <property type="entry name" value="F-box_AtAFR-like"/>
    <property type="match status" value="1"/>
</dbReference>
<dbReference type="Gene3D" id="2.120.10.80">
    <property type="entry name" value="Kelch-type beta propeller"/>
    <property type="match status" value="1"/>
</dbReference>
<dbReference type="InterPro" id="IPR050354">
    <property type="entry name" value="F-box/kelch-repeat_ARATH"/>
</dbReference>
<dbReference type="InterPro" id="IPR001810">
    <property type="entry name" value="F-box_dom"/>
</dbReference>
<dbReference type="InterPro" id="IPR015915">
    <property type="entry name" value="Kelch-typ_b-propeller"/>
</dbReference>
<dbReference type="PANTHER" id="PTHR24414:SF154">
    <property type="entry name" value="BNAC05G49580D PROTEIN"/>
    <property type="match status" value="1"/>
</dbReference>
<dbReference type="PANTHER" id="PTHR24414">
    <property type="entry name" value="F-BOX/KELCH-REPEAT PROTEIN SKIP4"/>
    <property type="match status" value="1"/>
</dbReference>
<dbReference type="Pfam" id="PF00646">
    <property type="entry name" value="F-box"/>
    <property type="match status" value="1"/>
</dbReference>
<dbReference type="Pfam" id="PF25210">
    <property type="entry name" value="Kelch_FKB95"/>
    <property type="match status" value="1"/>
</dbReference>
<dbReference type="SUPFAM" id="SSF117281">
    <property type="entry name" value="Kelch motif"/>
    <property type="match status" value="1"/>
</dbReference>
<gene>
    <name type="ordered locus">At3g24610</name>
    <name type="ORF">MOB24.20</name>
</gene>
<sequence>MSNEAPEVEPHSKRRKKEASPSSSSGFLQSLPEAVAMICLARVSRLDHAALSLVSKSCRSMVLSPELYQTRSLIGYAEKFLYVCFCMPTDETLCCHEKINGNRSLNVLFLDCRSHKWHHVTSMRVARVSPEVSVVDGKINVWGGCKYKHYYDWGEVFDPKTQTWADMSIPKPVREEKIYVVDSWDVGSYYYLPSKSIWEKGNQDSKRSKDWCLIDKLIYSCGNDGGIYWCEAGELDWCDAVGIDWREVFGLEFLSKELRESRVVYFGGKMVKVWESYKIMYNISLNLEELLPETQLTNLTELGHNVLVFWEKLECCCDGFKILEIWCAEISLERWEGGEILGRCDWCHPILAINLLTVDPLFYHSMVLYSIPVDV</sequence>
<proteinExistence type="predicted"/>
<protein>
    <recommendedName>
        <fullName>Putative F-box/kelch-repeat protein At3g24610</fullName>
    </recommendedName>
</protein>
<evidence type="ECO:0000256" key="1">
    <source>
        <dbReference type="SAM" id="MobiDB-lite"/>
    </source>
</evidence>
<keyword id="KW-0880">Kelch repeat</keyword>
<keyword id="KW-1185">Reference proteome</keyword>
<name>FBK68_ARATH</name>
<organism>
    <name type="scientific">Arabidopsis thaliana</name>
    <name type="common">Mouse-ear cress</name>
    <dbReference type="NCBI Taxonomy" id="3702"/>
    <lineage>
        <taxon>Eukaryota</taxon>
        <taxon>Viridiplantae</taxon>
        <taxon>Streptophyta</taxon>
        <taxon>Embryophyta</taxon>
        <taxon>Tracheophyta</taxon>
        <taxon>Spermatophyta</taxon>
        <taxon>Magnoliopsida</taxon>
        <taxon>eudicotyledons</taxon>
        <taxon>Gunneridae</taxon>
        <taxon>Pentapetalae</taxon>
        <taxon>rosids</taxon>
        <taxon>malvids</taxon>
        <taxon>Brassicales</taxon>
        <taxon>Brassicaceae</taxon>
        <taxon>Camelineae</taxon>
        <taxon>Arabidopsis</taxon>
    </lineage>
</organism>
<feature type="chain" id="PRO_0000283228" description="Putative F-box/kelch-repeat protein At3g24610">
    <location>
        <begin position="1"/>
        <end position="375"/>
    </location>
</feature>
<feature type="domain" description="F-box">
    <location>
        <begin position="25"/>
        <end position="71"/>
    </location>
</feature>
<feature type="repeat" description="Kelch">
    <location>
        <begin position="138"/>
        <end position="183"/>
    </location>
</feature>
<feature type="region of interest" description="Disordered" evidence="1">
    <location>
        <begin position="1"/>
        <end position="27"/>
    </location>
</feature>